<gene>
    <name type="primary">aceF</name>
    <name type="ordered locus">HI_1232</name>
</gene>
<protein>
    <recommendedName>
        <fullName>Dihydrolipoyllysine-residue acetyltransferase component of pyruvate dehydrogenase complex</fullName>
        <ecNumber>2.3.1.12</ecNumber>
    </recommendedName>
    <alternativeName>
        <fullName>Dihydrolipoamide acetyltransferase component of pyruvate dehydrogenase complex</fullName>
    </alternativeName>
    <alternativeName>
        <fullName>E2</fullName>
    </alternativeName>
</protein>
<dbReference type="EC" id="2.3.1.12"/>
<dbReference type="EMBL" id="L42023">
    <property type="protein sequence ID" value="AAC22885.1"/>
    <property type="molecule type" value="Genomic_DNA"/>
</dbReference>
<dbReference type="PIR" id="I64111">
    <property type="entry name" value="I64111"/>
</dbReference>
<dbReference type="RefSeq" id="NP_439388.1">
    <property type="nucleotide sequence ID" value="NC_000907.1"/>
</dbReference>
<dbReference type="SMR" id="P45118"/>
<dbReference type="STRING" id="71421.HI_1232"/>
<dbReference type="EnsemblBacteria" id="AAC22885">
    <property type="protein sequence ID" value="AAC22885"/>
    <property type="gene ID" value="HI_1232"/>
</dbReference>
<dbReference type="KEGG" id="hin:HI_1232"/>
<dbReference type="PATRIC" id="fig|71421.8.peg.1284"/>
<dbReference type="eggNOG" id="COG0508">
    <property type="taxonomic scope" value="Bacteria"/>
</dbReference>
<dbReference type="HOGENOM" id="CLU_016733_10_0_6"/>
<dbReference type="OrthoDB" id="9805770at2"/>
<dbReference type="PhylomeDB" id="P45118"/>
<dbReference type="BioCyc" id="HINF71421:G1GJ1-1263-MONOMER"/>
<dbReference type="Proteomes" id="UP000000579">
    <property type="component" value="Chromosome"/>
</dbReference>
<dbReference type="GO" id="GO:0005737">
    <property type="term" value="C:cytoplasm"/>
    <property type="evidence" value="ECO:0000318"/>
    <property type="project" value="GO_Central"/>
</dbReference>
<dbReference type="GO" id="GO:0045254">
    <property type="term" value="C:pyruvate dehydrogenase complex"/>
    <property type="evidence" value="ECO:0007669"/>
    <property type="project" value="InterPro"/>
</dbReference>
<dbReference type="GO" id="GO:0016407">
    <property type="term" value="F:acetyltransferase activity"/>
    <property type="evidence" value="ECO:0000318"/>
    <property type="project" value="GO_Central"/>
</dbReference>
<dbReference type="GO" id="GO:0004742">
    <property type="term" value="F:dihydrolipoyllysine-residue acetyltransferase activity"/>
    <property type="evidence" value="ECO:0007669"/>
    <property type="project" value="UniProtKB-EC"/>
</dbReference>
<dbReference type="GO" id="GO:0031405">
    <property type="term" value="F:lipoic acid binding"/>
    <property type="evidence" value="ECO:0000318"/>
    <property type="project" value="GO_Central"/>
</dbReference>
<dbReference type="GO" id="GO:0006086">
    <property type="term" value="P:pyruvate decarboxylation to acetyl-CoA"/>
    <property type="evidence" value="ECO:0000318"/>
    <property type="project" value="GO_Central"/>
</dbReference>
<dbReference type="CDD" id="cd06849">
    <property type="entry name" value="lipoyl_domain"/>
    <property type="match status" value="2"/>
</dbReference>
<dbReference type="FunFam" id="2.40.50.100:FF:000009">
    <property type="entry name" value="Acetyltransferase component of pyruvate dehydrogenase complex"/>
    <property type="match status" value="2"/>
</dbReference>
<dbReference type="FunFam" id="3.30.559.10:FF:000004">
    <property type="entry name" value="Acetyltransferase component of pyruvate dehydrogenase complex"/>
    <property type="match status" value="1"/>
</dbReference>
<dbReference type="FunFam" id="4.10.320.10:FF:000003">
    <property type="entry name" value="Acetyltransferase component of pyruvate dehydrogenase complex"/>
    <property type="match status" value="1"/>
</dbReference>
<dbReference type="Gene3D" id="2.40.50.100">
    <property type="match status" value="2"/>
</dbReference>
<dbReference type="Gene3D" id="3.30.559.10">
    <property type="entry name" value="Chloramphenicol acetyltransferase-like domain"/>
    <property type="match status" value="1"/>
</dbReference>
<dbReference type="Gene3D" id="4.10.320.10">
    <property type="entry name" value="E3-binding domain"/>
    <property type="match status" value="1"/>
</dbReference>
<dbReference type="InterPro" id="IPR003016">
    <property type="entry name" value="2-oxoA_DH_lipoyl-BS"/>
</dbReference>
<dbReference type="InterPro" id="IPR001078">
    <property type="entry name" value="2-oxoacid_DH_actylTfrase"/>
</dbReference>
<dbReference type="InterPro" id="IPR050743">
    <property type="entry name" value="2-oxoacid_DH_E2_comp"/>
</dbReference>
<dbReference type="InterPro" id="IPR006256">
    <property type="entry name" value="AcTrfase_Pyrv_DH_cplx"/>
</dbReference>
<dbReference type="InterPro" id="IPR000089">
    <property type="entry name" value="Biotin_lipoyl"/>
</dbReference>
<dbReference type="InterPro" id="IPR023213">
    <property type="entry name" value="CAT-like_dom_sf"/>
</dbReference>
<dbReference type="InterPro" id="IPR036625">
    <property type="entry name" value="E3-bd_dom_sf"/>
</dbReference>
<dbReference type="InterPro" id="IPR004167">
    <property type="entry name" value="PSBD"/>
</dbReference>
<dbReference type="InterPro" id="IPR011053">
    <property type="entry name" value="Single_hybrid_motif"/>
</dbReference>
<dbReference type="NCBIfam" id="TIGR01348">
    <property type="entry name" value="PDHac_trf_long"/>
    <property type="match status" value="1"/>
</dbReference>
<dbReference type="NCBIfam" id="NF008814">
    <property type="entry name" value="PRK11854.1"/>
    <property type="match status" value="1"/>
</dbReference>
<dbReference type="PANTHER" id="PTHR43178">
    <property type="entry name" value="DIHYDROLIPOAMIDE ACETYLTRANSFERASE COMPONENT OF PYRUVATE DEHYDROGENASE COMPLEX"/>
    <property type="match status" value="1"/>
</dbReference>
<dbReference type="PANTHER" id="PTHR43178:SF2">
    <property type="entry name" value="DIHYDROLIPOYLLYSINE-RESIDUE ACETYLTRANSFERASE COMPONENT OF PYRUVATE DEHYDROGENASE COMPLEX"/>
    <property type="match status" value="1"/>
</dbReference>
<dbReference type="Pfam" id="PF00198">
    <property type="entry name" value="2-oxoacid_dh"/>
    <property type="match status" value="1"/>
</dbReference>
<dbReference type="Pfam" id="PF00364">
    <property type="entry name" value="Biotin_lipoyl"/>
    <property type="match status" value="2"/>
</dbReference>
<dbReference type="Pfam" id="PF02817">
    <property type="entry name" value="E3_binding"/>
    <property type="match status" value="1"/>
</dbReference>
<dbReference type="SUPFAM" id="SSF52777">
    <property type="entry name" value="CoA-dependent acyltransferases"/>
    <property type="match status" value="1"/>
</dbReference>
<dbReference type="SUPFAM" id="SSF47005">
    <property type="entry name" value="Peripheral subunit-binding domain of 2-oxo acid dehydrogenase complex"/>
    <property type="match status" value="1"/>
</dbReference>
<dbReference type="SUPFAM" id="SSF51230">
    <property type="entry name" value="Single hybrid motif"/>
    <property type="match status" value="2"/>
</dbReference>
<dbReference type="PROSITE" id="PS50968">
    <property type="entry name" value="BIOTINYL_LIPOYL"/>
    <property type="match status" value="2"/>
</dbReference>
<dbReference type="PROSITE" id="PS00189">
    <property type="entry name" value="LIPOYL"/>
    <property type="match status" value="2"/>
</dbReference>
<dbReference type="PROSITE" id="PS51826">
    <property type="entry name" value="PSBD"/>
    <property type="match status" value="1"/>
</dbReference>
<feature type="chain" id="PRO_0000162279" description="Dihydrolipoyllysine-residue acetyltransferase component of pyruvate dehydrogenase complex">
    <location>
        <begin position="1"/>
        <end position="567"/>
    </location>
</feature>
<feature type="domain" description="Lipoyl-binding 1" evidence="3">
    <location>
        <begin position="2"/>
        <end position="75"/>
    </location>
</feature>
<feature type="domain" description="Lipoyl-binding 2" evidence="3">
    <location>
        <begin position="108"/>
        <end position="181"/>
    </location>
</feature>
<feature type="domain" description="Peripheral subunit-binding (PSBD)" evidence="4">
    <location>
        <begin position="258"/>
        <end position="295"/>
    </location>
</feature>
<feature type="region of interest" description="Disordered" evidence="5">
    <location>
        <begin position="192"/>
        <end position="249"/>
    </location>
</feature>
<feature type="compositionally biased region" description="Low complexity" evidence="5">
    <location>
        <begin position="192"/>
        <end position="238"/>
    </location>
</feature>
<feature type="compositionally biased region" description="Polar residues" evidence="5">
    <location>
        <begin position="239"/>
        <end position="249"/>
    </location>
</feature>
<feature type="active site" evidence="2">
    <location>
        <position position="484"/>
    </location>
</feature>
<feature type="active site" evidence="2">
    <location>
        <position position="540"/>
    </location>
</feature>
<feature type="active site" evidence="2">
    <location>
        <position position="544"/>
    </location>
</feature>
<feature type="modified residue" description="N6-lipoyllysine" evidence="1 3">
    <location>
        <position position="41"/>
    </location>
</feature>
<feature type="modified residue" description="N6-lipoyllysine" evidence="1 3">
    <location>
        <position position="147"/>
    </location>
</feature>
<name>ODP2_HAEIN</name>
<reference key="1">
    <citation type="journal article" date="1995" name="Science">
        <title>Whole-genome random sequencing and assembly of Haemophilus influenzae Rd.</title>
        <authorList>
            <person name="Fleischmann R.D."/>
            <person name="Adams M.D."/>
            <person name="White O."/>
            <person name="Clayton R.A."/>
            <person name="Kirkness E.F."/>
            <person name="Kerlavage A.R."/>
            <person name="Bult C.J."/>
            <person name="Tomb J.-F."/>
            <person name="Dougherty B.A."/>
            <person name="Merrick J.M."/>
            <person name="McKenney K."/>
            <person name="Sutton G.G."/>
            <person name="FitzHugh W."/>
            <person name="Fields C.A."/>
            <person name="Gocayne J.D."/>
            <person name="Scott J.D."/>
            <person name="Shirley R."/>
            <person name="Liu L.-I."/>
            <person name="Glodek A."/>
            <person name="Kelley J.M."/>
            <person name="Weidman J.F."/>
            <person name="Phillips C.A."/>
            <person name="Spriggs T."/>
            <person name="Hedblom E."/>
            <person name="Cotton M.D."/>
            <person name="Utterback T.R."/>
            <person name="Hanna M.C."/>
            <person name="Nguyen D.T."/>
            <person name="Saudek D.M."/>
            <person name="Brandon R.C."/>
            <person name="Fine L.D."/>
            <person name="Fritchman J.L."/>
            <person name="Fuhrmann J.L."/>
            <person name="Geoghagen N.S.M."/>
            <person name="Gnehm C.L."/>
            <person name="McDonald L.A."/>
            <person name="Small K.V."/>
            <person name="Fraser C.M."/>
            <person name="Smith H.O."/>
            <person name="Venter J.C."/>
        </authorList>
    </citation>
    <scope>NUCLEOTIDE SEQUENCE [LARGE SCALE GENOMIC DNA]</scope>
    <source>
        <strain>ATCC 51907 / DSM 11121 / KW20 / Rd</strain>
    </source>
</reference>
<evidence type="ECO:0000250" key="1"/>
<evidence type="ECO:0000255" key="2"/>
<evidence type="ECO:0000255" key="3">
    <source>
        <dbReference type="PROSITE-ProRule" id="PRU01066"/>
    </source>
</evidence>
<evidence type="ECO:0000255" key="4">
    <source>
        <dbReference type="PROSITE-ProRule" id="PRU01170"/>
    </source>
</evidence>
<evidence type="ECO:0000256" key="5">
    <source>
        <dbReference type="SAM" id="MobiDB-lite"/>
    </source>
</evidence>
<evidence type="ECO:0000305" key="6"/>
<comment type="function">
    <text evidence="1">The pyruvate dehydrogenase complex catalyzes the overall conversion of pyruvate to acetyl-CoA and CO(2). It contains multiple copies of three enzymatic components: pyruvate dehydrogenase (E1), dihydrolipoamide acetyltransferase (E2) and lipoamide dehydrogenase (E3) (By similarity).</text>
</comment>
<comment type="catalytic activity">
    <reaction>
        <text>N(6)-[(R)-dihydrolipoyl]-L-lysyl-[protein] + acetyl-CoA = N(6)-[(R)-S(8)-acetyldihydrolipoyl]-L-lysyl-[protein] + CoA</text>
        <dbReference type="Rhea" id="RHEA:17017"/>
        <dbReference type="Rhea" id="RHEA-COMP:10475"/>
        <dbReference type="Rhea" id="RHEA-COMP:10478"/>
        <dbReference type="ChEBI" id="CHEBI:57287"/>
        <dbReference type="ChEBI" id="CHEBI:57288"/>
        <dbReference type="ChEBI" id="CHEBI:83100"/>
        <dbReference type="ChEBI" id="CHEBI:83111"/>
        <dbReference type="EC" id="2.3.1.12"/>
    </reaction>
</comment>
<comment type="cofactor">
    <cofactor evidence="1">
        <name>(R)-lipoate</name>
        <dbReference type="ChEBI" id="CHEBI:83088"/>
    </cofactor>
    <text evidence="1">Binds 2 lipoyl cofactors covalently.</text>
</comment>
<comment type="subunit">
    <text evidence="1">Forms a 24-polypeptide structural core with octahedral symmetry.</text>
</comment>
<comment type="similarity">
    <text evidence="6">Belongs to the 2-oxoacid dehydrogenase family.</text>
</comment>
<organism>
    <name type="scientific">Haemophilus influenzae (strain ATCC 51907 / DSM 11121 / KW20 / Rd)</name>
    <dbReference type="NCBI Taxonomy" id="71421"/>
    <lineage>
        <taxon>Bacteria</taxon>
        <taxon>Pseudomonadati</taxon>
        <taxon>Pseudomonadota</taxon>
        <taxon>Gammaproteobacteria</taxon>
        <taxon>Pasteurellales</taxon>
        <taxon>Pasteurellaceae</taxon>
        <taxon>Haemophilus</taxon>
    </lineage>
</organism>
<sequence length="567" mass="59411">MSKQIQIPDIGSDEVTVTEVMVNVGDTISVDQSIINVEGDKASMEVPAPEAGVVKEILVKVGDKVSTGTPMLVLEAAGAAPAADEPTAPVADAPTAPVVATAPTASAIVEVNVPDIGGDEVNVTEIMVAVGDTITEEQSLITVEGDKASMEVPAPFGGVVKEILVKSGDKVSTGSLIMRFEVLGAAPAESASAPASTSAPQTAAPATTAQAPQAAAPDTTAQAPQAAAPDTTAQAAQSNNNVSGLSQEQVEASTGYAHATPVIRRLAREFGVNLDKVKGTGRKGRIVKEDIEAYVKTAVKAYESGATAQATGNGVANGAGLGLLPWPKVDFSKFGEIEEVELSRINKISGANLHRNWVIIPHVTHFDKADITDLEAFRKEQNALREKQKLGVKITPVVFIMKAVAKALEAYPRFNSSITEDAQRLILKKYINIGVAVDTPNGLVVPVFKNVNKKGIIELSRELMEVSKKAREGKLTASDMQGGCFTISSLGGIGTTHFAPIVNAPEVAILGVSKSSMEPVWNGKEFAPRLILPMSLSFDHRVIDGADGARFISYLGSVLADLRRLVM</sequence>
<proteinExistence type="inferred from homology"/>
<accession>P45118</accession>
<keyword id="KW-0012">Acyltransferase</keyword>
<keyword id="KW-0450">Lipoyl</keyword>
<keyword id="KW-1185">Reference proteome</keyword>
<keyword id="KW-0677">Repeat</keyword>
<keyword id="KW-0808">Transferase</keyword>